<comment type="function">
    <text evidence="2">Cell wall formation.</text>
</comment>
<comment type="catalytic activity">
    <reaction evidence="2">
        <text>2 D-alanine + ATP = D-alanyl-D-alanine + ADP + phosphate + H(+)</text>
        <dbReference type="Rhea" id="RHEA:11224"/>
        <dbReference type="ChEBI" id="CHEBI:15378"/>
        <dbReference type="ChEBI" id="CHEBI:30616"/>
        <dbReference type="ChEBI" id="CHEBI:43474"/>
        <dbReference type="ChEBI" id="CHEBI:57416"/>
        <dbReference type="ChEBI" id="CHEBI:57822"/>
        <dbReference type="ChEBI" id="CHEBI:456216"/>
        <dbReference type="EC" id="6.3.2.4"/>
    </reaction>
</comment>
<comment type="cofactor">
    <cofactor evidence="1">
        <name>Mg(2+)</name>
        <dbReference type="ChEBI" id="CHEBI:18420"/>
    </cofactor>
    <cofactor evidence="1">
        <name>Mn(2+)</name>
        <dbReference type="ChEBI" id="CHEBI:29035"/>
    </cofactor>
    <text evidence="1">Binds 2 magnesium or manganese ions per subunit.</text>
</comment>
<comment type="pathway">
    <text evidence="2">Cell wall biogenesis; peptidoglycan biosynthesis.</text>
</comment>
<comment type="subcellular location">
    <subcellularLocation>
        <location evidence="2">Cytoplasm</location>
    </subcellularLocation>
</comment>
<comment type="similarity">
    <text evidence="2">Belongs to the D-alanine--D-alanine ligase family.</text>
</comment>
<sequence>MSKLRVAIIFGGKSTEHQVSLQSAKNIINELDRTKFDLCLIGINEQGQWHEYAEDNYLINSDNPSTISLSQPLRPVAIIPGSTRQQFISLTDGQPLAQIDVVFPIVHGAYGEDGTLQGLLHMIDMPYVGPNIMSSAACMDKDITKRLLDDAGLAVAPFITLMAHQLNDISYNEVVEQLGLPLFIKPANLGSSVGISKVNNEAEFNAALSMAFEYDLKVIIESAIVGREIECAVLGNEEPEVSPCGEIVLNDAFYAYNTKYIDDDGAKVVVPADLDNAISLHIRQTALKAYQVLNCLGMSRVDVFLTEDNQVIINEINTLPGFTNISMYPKLWQSTGLDYQSLITKLIELALEHHKKTAVLKTKCEL</sequence>
<reference key="1">
    <citation type="journal article" date="2008" name="J. Bacteriol.">
        <title>Complete genome sequence of uropathogenic Proteus mirabilis, a master of both adherence and motility.</title>
        <authorList>
            <person name="Pearson M.M."/>
            <person name="Sebaihia M."/>
            <person name="Churcher C."/>
            <person name="Quail M.A."/>
            <person name="Seshasayee A.S."/>
            <person name="Luscombe N.M."/>
            <person name="Abdellah Z."/>
            <person name="Arrosmith C."/>
            <person name="Atkin B."/>
            <person name="Chillingworth T."/>
            <person name="Hauser H."/>
            <person name="Jagels K."/>
            <person name="Moule S."/>
            <person name="Mungall K."/>
            <person name="Norbertczak H."/>
            <person name="Rabbinowitsch E."/>
            <person name="Walker D."/>
            <person name="Whithead S."/>
            <person name="Thomson N.R."/>
            <person name="Rather P.N."/>
            <person name="Parkhill J."/>
            <person name="Mobley H.L.T."/>
        </authorList>
    </citation>
    <scope>NUCLEOTIDE SEQUENCE [LARGE SCALE GENOMIC DNA]</scope>
    <source>
        <strain>HI4320</strain>
    </source>
</reference>
<keyword id="KW-0067">ATP-binding</keyword>
<keyword id="KW-0133">Cell shape</keyword>
<keyword id="KW-0961">Cell wall biogenesis/degradation</keyword>
<keyword id="KW-0963">Cytoplasm</keyword>
<keyword id="KW-0436">Ligase</keyword>
<keyword id="KW-0460">Magnesium</keyword>
<keyword id="KW-0464">Manganese</keyword>
<keyword id="KW-0479">Metal-binding</keyword>
<keyword id="KW-0547">Nucleotide-binding</keyword>
<keyword id="KW-0573">Peptidoglycan synthesis</keyword>
<keyword id="KW-1185">Reference proteome</keyword>
<protein>
    <recommendedName>
        <fullName evidence="2">D-alanine--D-alanine ligase</fullName>
        <ecNumber evidence="2">6.3.2.4</ecNumber>
    </recommendedName>
    <alternativeName>
        <fullName evidence="2">D-Ala-D-Ala ligase</fullName>
    </alternativeName>
    <alternativeName>
        <fullName evidence="2">D-alanylalanine synthetase</fullName>
    </alternativeName>
</protein>
<name>DDL_PROMH</name>
<proteinExistence type="inferred from homology"/>
<organism>
    <name type="scientific">Proteus mirabilis (strain HI4320)</name>
    <dbReference type="NCBI Taxonomy" id="529507"/>
    <lineage>
        <taxon>Bacteria</taxon>
        <taxon>Pseudomonadati</taxon>
        <taxon>Pseudomonadota</taxon>
        <taxon>Gammaproteobacteria</taxon>
        <taxon>Enterobacterales</taxon>
        <taxon>Morganellaceae</taxon>
        <taxon>Proteus</taxon>
    </lineage>
</organism>
<gene>
    <name evidence="2" type="primary">ddl</name>
    <name type="ordered locus">PMI1243</name>
</gene>
<feature type="chain" id="PRO_1000091204" description="D-alanine--D-alanine ligase">
    <location>
        <begin position="1"/>
        <end position="366"/>
    </location>
</feature>
<feature type="domain" description="ATP-grasp" evidence="2">
    <location>
        <begin position="145"/>
        <end position="348"/>
    </location>
</feature>
<feature type="binding site" evidence="2">
    <location>
        <begin position="175"/>
        <end position="230"/>
    </location>
    <ligand>
        <name>ATP</name>
        <dbReference type="ChEBI" id="CHEBI:30616"/>
    </ligand>
</feature>
<feature type="binding site" evidence="2">
    <location>
        <position position="302"/>
    </location>
    <ligand>
        <name>Mg(2+)</name>
        <dbReference type="ChEBI" id="CHEBI:18420"/>
        <label>1</label>
    </ligand>
</feature>
<feature type="binding site" evidence="2">
    <location>
        <position position="315"/>
    </location>
    <ligand>
        <name>Mg(2+)</name>
        <dbReference type="ChEBI" id="CHEBI:18420"/>
        <label>1</label>
    </ligand>
</feature>
<feature type="binding site" evidence="2">
    <location>
        <position position="315"/>
    </location>
    <ligand>
        <name>Mg(2+)</name>
        <dbReference type="ChEBI" id="CHEBI:18420"/>
        <label>2</label>
    </ligand>
</feature>
<feature type="binding site" evidence="2">
    <location>
        <position position="317"/>
    </location>
    <ligand>
        <name>Mg(2+)</name>
        <dbReference type="ChEBI" id="CHEBI:18420"/>
        <label>2</label>
    </ligand>
</feature>
<accession>B4ETX3</accession>
<evidence type="ECO:0000250" key="1"/>
<evidence type="ECO:0000255" key="2">
    <source>
        <dbReference type="HAMAP-Rule" id="MF_00047"/>
    </source>
</evidence>
<dbReference type="EC" id="6.3.2.4" evidence="2"/>
<dbReference type="EMBL" id="AM942759">
    <property type="protein sequence ID" value="CAR42650.1"/>
    <property type="molecule type" value="Genomic_DNA"/>
</dbReference>
<dbReference type="SMR" id="B4ETX3"/>
<dbReference type="EnsemblBacteria" id="CAR42650">
    <property type="protein sequence ID" value="CAR42650"/>
    <property type="gene ID" value="PMI1243"/>
</dbReference>
<dbReference type="GeneID" id="6800335"/>
<dbReference type="KEGG" id="pmr:PMI1243"/>
<dbReference type="eggNOG" id="COG1181">
    <property type="taxonomic scope" value="Bacteria"/>
</dbReference>
<dbReference type="HOGENOM" id="CLU_039268_0_1_6"/>
<dbReference type="UniPathway" id="UPA00219"/>
<dbReference type="Proteomes" id="UP000008319">
    <property type="component" value="Chromosome"/>
</dbReference>
<dbReference type="GO" id="GO:0005829">
    <property type="term" value="C:cytosol"/>
    <property type="evidence" value="ECO:0007669"/>
    <property type="project" value="TreeGrafter"/>
</dbReference>
<dbReference type="GO" id="GO:0005524">
    <property type="term" value="F:ATP binding"/>
    <property type="evidence" value="ECO:0007669"/>
    <property type="project" value="UniProtKB-KW"/>
</dbReference>
<dbReference type="GO" id="GO:0008716">
    <property type="term" value="F:D-alanine-D-alanine ligase activity"/>
    <property type="evidence" value="ECO:0007669"/>
    <property type="project" value="UniProtKB-UniRule"/>
</dbReference>
<dbReference type="GO" id="GO:0046872">
    <property type="term" value="F:metal ion binding"/>
    <property type="evidence" value="ECO:0007669"/>
    <property type="project" value="UniProtKB-KW"/>
</dbReference>
<dbReference type="GO" id="GO:0071555">
    <property type="term" value="P:cell wall organization"/>
    <property type="evidence" value="ECO:0007669"/>
    <property type="project" value="UniProtKB-KW"/>
</dbReference>
<dbReference type="GO" id="GO:0009252">
    <property type="term" value="P:peptidoglycan biosynthetic process"/>
    <property type="evidence" value="ECO:0007669"/>
    <property type="project" value="UniProtKB-UniRule"/>
</dbReference>
<dbReference type="GO" id="GO:0008360">
    <property type="term" value="P:regulation of cell shape"/>
    <property type="evidence" value="ECO:0007669"/>
    <property type="project" value="UniProtKB-KW"/>
</dbReference>
<dbReference type="FunFam" id="3.30.1490.20:FF:000007">
    <property type="entry name" value="D-alanine--D-alanine ligase"/>
    <property type="match status" value="1"/>
</dbReference>
<dbReference type="FunFam" id="3.30.470.20:FF:000008">
    <property type="entry name" value="D-alanine--D-alanine ligase"/>
    <property type="match status" value="1"/>
</dbReference>
<dbReference type="Gene3D" id="3.40.50.20">
    <property type="match status" value="1"/>
</dbReference>
<dbReference type="Gene3D" id="3.30.1490.20">
    <property type="entry name" value="ATP-grasp fold, A domain"/>
    <property type="match status" value="1"/>
</dbReference>
<dbReference type="Gene3D" id="3.30.470.20">
    <property type="entry name" value="ATP-grasp fold, B domain"/>
    <property type="match status" value="1"/>
</dbReference>
<dbReference type="HAMAP" id="MF_00047">
    <property type="entry name" value="Dala_Dala_lig"/>
    <property type="match status" value="1"/>
</dbReference>
<dbReference type="InterPro" id="IPR011761">
    <property type="entry name" value="ATP-grasp"/>
</dbReference>
<dbReference type="InterPro" id="IPR013815">
    <property type="entry name" value="ATP_grasp_subdomain_1"/>
</dbReference>
<dbReference type="InterPro" id="IPR000291">
    <property type="entry name" value="D-Ala_lig_Van_CS"/>
</dbReference>
<dbReference type="InterPro" id="IPR005905">
    <property type="entry name" value="D_ala_D_ala"/>
</dbReference>
<dbReference type="InterPro" id="IPR011095">
    <property type="entry name" value="Dala_Dala_lig_C"/>
</dbReference>
<dbReference type="InterPro" id="IPR011127">
    <property type="entry name" value="Dala_Dala_lig_N"/>
</dbReference>
<dbReference type="InterPro" id="IPR016185">
    <property type="entry name" value="PreATP-grasp_dom_sf"/>
</dbReference>
<dbReference type="NCBIfam" id="TIGR01205">
    <property type="entry name" value="D_ala_D_alaTIGR"/>
    <property type="match status" value="1"/>
</dbReference>
<dbReference type="NCBIfam" id="NF002378">
    <property type="entry name" value="PRK01372.1"/>
    <property type="match status" value="1"/>
</dbReference>
<dbReference type="NCBIfam" id="NF002525">
    <property type="entry name" value="PRK01966.1-1"/>
    <property type="match status" value="1"/>
</dbReference>
<dbReference type="NCBIfam" id="NF002528">
    <property type="entry name" value="PRK01966.1-4"/>
    <property type="match status" value="1"/>
</dbReference>
<dbReference type="PANTHER" id="PTHR23132">
    <property type="entry name" value="D-ALANINE--D-ALANINE LIGASE"/>
    <property type="match status" value="1"/>
</dbReference>
<dbReference type="PANTHER" id="PTHR23132:SF25">
    <property type="entry name" value="D-ALANINE--D-ALANINE LIGASE A"/>
    <property type="match status" value="1"/>
</dbReference>
<dbReference type="Pfam" id="PF07478">
    <property type="entry name" value="Dala_Dala_lig_C"/>
    <property type="match status" value="1"/>
</dbReference>
<dbReference type="Pfam" id="PF01820">
    <property type="entry name" value="Dala_Dala_lig_N"/>
    <property type="match status" value="1"/>
</dbReference>
<dbReference type="PIRSF" id="PIRSF039102">
    <property type="entry name" value="Ddl/VanB"/>
    <property type="match status" value="1"/>
</dbReference>
<dbReference type="SUPFAM" id="SSF56059">
    <property type="entry name" value="Glutathione synthetase ATP-binding domain-like"/>
    <property type="match status" value="1"/>
</dbReference>
<dbReference type="SUPFAM" id="SSF52440">
    <property type="entry name" value="PreATP-grasp domain"/>
    <property type="match status" value="1"/>
</dbReference>
<dbReference type="PROSITE" id="PS50975">
    <property type="entry name" value="ATP_GRASP"/>
    <property type="match status" value="1"/>
</dbReference>
<dbReference type="PROSITE" id="PS00843">
    <property type="entry name" value="DALA_DALA_LIGASE_1"/>
    <property type="match status" value="1"/>
</dbReference>
<dbReference type="PROSITE" id="PS00844">
    <property type="entry name" value="DALA_DALA_LIGASE_2"/>
    <property type="match status" value="1"/>
</dbReference>